<reference key="1">
    <citation type="journal article" date="2007" name="Proc. Natl. Acad. Sci. U.S.A.">
        <title>The genome of Syntrophus aciditrophicus: life at the thermodynamic limit of microbial growth.</title>
        <authorList>
            <person name="McInerney M.J."/>
            <person name="Rohlin L."/>
            <person name="Mouttaki H."/>
            <person name="Kim U."/>
            <person name="Krupp R.S."/>
            <person name="Rios-Hernandez L."/>
            <person name="Sieber J."/>
            <person name="Struchtemeyer C.G."/>
            <person name="Bhattacharyya A."/>
            <person name="Campbell J.W."/>
            <person name="Gunsalus R.P."/>
        </authorList>
    </citation>
    <scope>NUCLEOTIDE SEQUENCE [LARGE SCALE GENOMIC DNA]</scope>
    <source>
        <strain>SB</strain>
    </source>
</reference>
<feature type="chain" id="PRO_0000251686" description="Large ribosomal subunit protein uL16">
    <location>
        <begin position="1"/>
        <end position="140"/>
    </location>
</feature>
<comment type="function">
    <text evidence="1">Binds 23S rRNA and is also seen to make contacts with the A and possibly P site tRNAs.</text>
</comment>
<comment type="subunit">
    <text evidence="1">Part of the 50S ribosomal subunit.</text>
</comment>
<comment type="similarity">
    <text evidence="1">Belongs to the universal ribosomal protein uL16 family.</text>
</comment>
<sequence>MLMPKRVKYRKLQRGRRTGTATRGSKISFGEYGLQAEECGWITARQIEAARIAITRHVRRGGKIWIRIFPHKSITKKPAETRMGKGKGAPEEWVAVVKPGTVLYEMQGVSKEVAREAFRLASHKLPIGTRFLSRELTDEG</sequence>
<name>RL16_SYNAS</name>
<evidence type="ECO:0000255" key="1">
    <source>
        <dbReference type="HAMAP-Rule" id="MF_01342"/>
    </source>
</evidence>
<evidence type="ECO:0000305" key="2"/>
<keyword id="KW-1185">Reference proteome</keyword>
<keyword id="KW-0687">Ribonucleoprotein</keyword>
<keyword id="KW-0689">Ribosomal protein</keyword>
<keyword id="KW-0694">RNA-binding</keyword>
<keyword id="KW-0699">rRNA-binding</keyword>
<keyword id="KW-0820">tRNA-binding</keyword>
<accession>Q2LQB3</accession>
<gene>
    <name evidence="1" type="primary">rplP</name>
    <name type="ordered locus">SYNAS_03090</name>
    <name type="ORF">SYN_00992</name>
</gene>
<protein>
    <recommendedName>
        <fullName evidence="1">Large ribosomal subunit protein uL16</fullName>
    </recommendedName>
    <alternativeName>
        <fullName evidence="2">50S ribosomal protein L16</fullName>
    </alternativeName>
</protein>
<proteinExistence type="inferred from homology"/>
<organism>
    <name type="scientific">Syntrophus aciditrophicus (strain SB)</name>
    <dbReference type="NCBI Taxonomy" id="56780"/>
    <lineage>
        <taxon>Bacteria</taxon>
        <taxon>Pseudomonadati</taxon>
        <taxon>Thermodesulfobacteriota</taxon>
        <taxon>Syntrophia</taxon>
        <taxon>Syntrophales</taxon>
        <taxon>Syntrophaceae</taxon>
        <taxon>Syntrophus</taxon>
    </lineage>
</organism>
<dbReference type="EMBL" id="CP000252">
    <property type="protein sequence ID" value="ABC76187.1"/>
    <property type="molecule type" value="Genomic_DNA"/>
</dbReference>
<dbReference type="RefSeq" id="WP_011416222.1">
    <property type="nucleotide sequence ID" value="NC_007759.1"/>
</dbReference>
<dbReference type="SMR" id="Q2LQB3"/>
<dbReference type="FunCoup" id="Q2LQB3">
    <property type="interactions" value="525"/>
</dbReference>
<dbReference type="STRING" id="56780.SYN_00992"/>
<dbReference type="KEGG" id="sat:SYN_00992"/>
<dbReference type="eggNOG" id="COG0197">
    <property type="taxonomic scope" value="Bacteria"/>
</dbReference>
<dbReference type="HOGENOM" id="CLU_078858_2_1_7"/>
<dbReference type="InParanoid" id="Q2LQB3"/>
<dbReference type="OrthoDB" id="9802589at2"/>
<dbReference type="Proteomes" id="UP000001933">
    <property type="component" value="Chromosome"/>
</dbReference>
<dbReference type="GO" id="GO:0022625">
    <property type="term" value="C:cytosolic large ribosomal subunit"/>
    <property type="evidence" value="ECO:0007669"/>
    <property type="project" value="TreeGrafter"/>
</dbReference>
<dbReference type="GO" id="GO:0019843">
    <property type="term" value="F:rRNA binding"/>
    <property type="evidence" value="ECO:0007669"/>
    <property type="project" value="UniProtKB-UniRule"/>
</dbReference>
<dbReference type="GO" id="GO:0003735">
    <property type="term" value="F:structural constituent of ribosome"/>
    <property type="evidence" value="ECO:0007669"/>
    <property type="project" value="InterPro"/>
</dbReference>
<dbReference type="GO" id="GO:0000049">
    <property type="term" value="F:tRNA binding"/>
    <property type="evidence" value="ECO:0007669"/>
    <property type="project" value="UniProtKB-KW"/>
</dbReference>
<dbReference type="GO" id="GO:0006412">
    <property type="term" value="P:translation"/>
    <property type="evidence" value="ECO:0007669"/>
    <property type="project" value="UniProtKB-UniRule"/>
</dbReference>
<dbReference type="CDD" id="cd01433">
    <property type="entry name" value="Ribosomal_L16_L10e"/>
    <property type="match status" value="1"/>
</dbReference>
<dbReference type="FunFam" id="3.90.1170.10:FF:000001">
    <property type="entry name" value="50S ribosomal protein L16"/>
    <property type="match status" value="1"/>
</dbReference>
<dbReference type="Gene3D" id="3.90.1170.10">
    <property type="entry name" value="Ribosomal protein L10e/L16"/>
    <property type="match status" value="1"/>
</dbReference>
<dbReference type="HAMAP" id="MF_01342">
    <property type="entry name" value="Ribosomal_uL16"/>
    <property type="match status" value="1"/>
</dbReference>
<dbReference type="InterPro" id="IPR047873">
    <property type="entry name" value="Ribosomal_uL16"/>
</dbReference>
<dbReference type="InterPro" id="IPR000114">
    <property type="entry name" value="Ribosomal_uL16_bact-type"/>
</dbReference>
<dbReference type="InterPro" id="IPR020798">
    <property type="entry name" value="Ribosomal_uL16_CS"/>
</dbReference>
<dbReference type="InterPro" id="IPR016180">
    <property type="entry name" value="Ribosomal_uL16_dom"/>
</dbReference>
<dbReference type="InterPro" id="IPR036920">
    <property type="entry name" value="Ribosomal_uL16_sf"/>
</dbReference>
<dbReference type="NCBIfam" id="TIGR01164">
    <property type="entry name" value="rplP_bact"/>
    <property type="match status" value="1"/>
</dbReference>
<dbReference type="PANTHER" id="PTHR12220">
    <property type="entry name" value="50S/60S RIBOSOMAL PROTEIN L16"/>
    <property type="match status" value="1"/>
</dbReference>
<dbReference type="PANTHER" id="PTHR12220:SF13">
    <property type="entry name" value="LARGE RIBOSOMAL SUBUNIT PROTEIN UL16M"/>
    <property type="match status" value="1"/>
</dbReference>
<dbReference type="Pfam" id="PF00252">
    <property type="entry name" value="Ribosomal_L16"/>
    <property type="match status" value="1"/>
</dbReference>
<dbReference type="PRINTS" id="PR00060">
    <property type="entry name" value="RIBOSOMALL16"/>
</dbReference>
<dbReference type="SUPFAM" id="SSF54686">
    <property type="entry name" value="Ribosomal protein L16p/L10e"/>
    <property type="match status" value="1"/>
</dbReference>
<dbReference type="PROSITE" id="PS00586">
    <property type="entry name" value="RIBOSOMAL_L16_1"/>
    <property type="match status" value="1"/>
</dbReference>
<dbReference type="PROSITE" id="PS00701">
    <property type="entry name" value="RIBOSOMAL_L16_2"/>
    <property type="match status" value="1"/>
</dbReference>